<protein>
    <recommendedName>
        <fullName>Enhancer of translation termination 1</fullName>
    </recommendedName>
</protein>
<proteinExistence type="inferred from homology"/>
<name>ETT1_LODEL</name>
<evidence type="ECO:0000250" key="1"/>
<evidence type="ECO:0000256" key="2">
    <source>
        <dbReference type="SAM" id="MobiDB-lite"/>
    </source>
</evidence>
<evidence type="ECO:0000305" key="3"/>
<keyword id="KW-0539">Nucleus</keyword>
<keyword id="KW-1185">Reference proteome</keyword>
<keyword id="KW-0804">Transcription</keyword>
<keyword id="KW-0805">Transcription regulation</keyword>
<keyword id="KW-0810">Translation regulation</keyword>
<sequence length="488" mass="55631">MAKRTLGLGNAARAKKQKLEQEGKSKSPTPSGSEDTTNQLTIELPETVDANDEIAQLRGLYKTYIDSERDSDLILNGIIHECDRLLREKVANSSGSKENQVSAELPAMFYKIYAIALSELANFHTDDIDQVSEFFDASLERVNDGLEKYPTDIDLVFTKAKILINQIVLQYVSQLKLESSVEEAHIKNMDIKGKLDAALRVYESAEKKAKESEDYLAFNSEEYWDILEAVDDLLDIVDNFGRQEEEEEEEEEEEEEEEEKEDHAKKGGELTELDVADAEAFAAAQEKIEGEEKGSETSDNDEEDNEEEEEEEEDEDEEEEIELPETHPLYIIKTTDEYNQWWRDHTLTYLSNLKQLSNASPRLLREVNHRLGQSYLQEAEVPSSVFTTLRYDEDYSGIEELEGLSEDDAKRVAQELIIKALEYLKAAEDKDEPESWVNIAEAMISLANLYEVESKEQEQLYQDAEKILTKANNATNGKYQDALDNLLG</sequence>
<gene>
    <name type="primary">ETT1</name>
    <name type="ORF">LELG_00729</name>
</gene>
<feature type="chain" id="PRO_0000406619" description="Enhancer of translation termination 1">
    <location>
        <begin position="1"/>
        <end position="488"/>
    </location>
</feature>
<feature type="region of interest" description="Disordered" evidence="2">
    <location>
        <begin position="1"/>
        <end position="38"/>
    </location>
</feature>
<feature type="region of interest" description="Disordered" evidence="2">
    <location>
        <begin position="242"/>
        <end position="272"/>
    </location>
</feature>
<feature type="region of interest" description="Disordered" evidence="2">
    <location>
        <begin position="287"/>
        <end position="328"/>
    </location>
</feature>
<feature type="compositionally biased region" description="Polar residues" evidence="2">
    <location>
        <begin position="26"/>
        <end position="38"/>
    </location>
</feature>
<feature type="compositionally biased region" description="Acidic residues" evidence="2">
    <location>
        <begin position="244"/>
        <end position="260"/>
    </location>
</feature>
<feature type="compositionally biased region" description="Basic and acidic residues" evidence="2">
    <location>
        <begin position="287"/>
        <end position="296"/>
    </location>
</feature>
<feature type="compositionally biased region" description="Acidic residues" evidence="2">
    <location>
        <begin position="298"/>
        <end position="323"/>
    </location>
</feature>
<comment type="function">
    <text evidence="1">Required for correct translation termination and probably involved in regulation of hypoxic gene expression.</text>
</comment>
<comment type="subcellular location">
    <subcellularLocation>
        <location evidence="1">Nucleus</location>
    </subcellularLocation>
</comment>
<comment type="similarity">
    <text evidence="3">Belongs to the ETT1 family.</text>
</comment>
<organism>
    <name type="scientific">Lodderomyces elongisporus (strain ATCC 11503 / CBS 2605 / JCM 1781 / NBRC 1676 / NRRL YB-4239)</name>
    <name type="common">Yeast</name>
    <name type="synonym">Saccharomyces elongisporus</name>
    <dbReference type="NCBI Taxonomy" id="379508"/>
    <lineage>
        <taxon>Eukaryota</taxon>
        <taxon>Fungi</taxon>
        <taxon>Dikarya</taxon>
        <taxon>Ascomycota</taxon>
        <taxon>Saccharomycotina</taxon>
        <taxon>Pichiomycetes</taxon>
        <taxon>Debaryomycetaceae</taxon>
        <taxon>Candida/Lodderomyces clade</taxon>
        <taxon>Lodderomyces</taxon>
    </lineage>
</organism>
<reference key="1">
    <citation type="journal article" date="2009" name="Nature">
        <title>Evolution of pathogenicity and sexual reproduction in eight Candida genomes.</title>
        <authorList>
            <person name="Butler G."/>
            <person name="Rasmussen M.D."/>
            <person name="Lin M.F."/>
            <person name="Santos M.A.S."/>
            <person name="Sakthikumar S."/>
            <person name="Munro C.A."/>
            <person name="Rheinbay E."/>
            <person name="Grabherr M."/>
            <person name="Forche A."/>
            <person name="Reedy J.L."/>
            <person name="Agrafioti I."/>
            <person name="Arnaud M.B."/>
            <person name="Bates S."/>
            <person name="Brown A.J.P."/>
            <person name="Brunke S."/>
            <person name="Costanzo M.C."/>
            <person name="Fitzpatrick D.A."/>
            <person name="de Groot P.W.J."/>
            <person name="Harris D."/>
            <person name="Hoyer L.L."/>
            <person name="Hube B."/>
            <person name="Klis F.M."/>
            <person name="Kodira C."/>
            <person name="Lennard N."/>
            <person name="Logue M.E."/>
            <person name="Martin R."/>
            <person name="Neiman A.M."/>
            <person name="Nikolaou E."/>
            <person name="Quail M.A."/>
            <person name="Quinn J."/>
            <person name="Santos M.C."/>
            <person name="Schmitzberger F.F."/>
            <person name="Sherlock G."/>
            <person name="Shah P."/>
            <person name="Silverstein K.A.T."/>
            <person name="Skrzypek M.S."/>
            <person name="Soll D."/>
            <person name="Staggs R."/>
            <person name="Stansfield I."/>
            <person name="Stumpf M.P.H."/>
            <person name="Sudbery P.E."/>
            <person name="Srikantha T."/>
            <person name="Zeng Q."/>
            <person name="Berman J."/>
            <person name="Berriman M."/>
            <person name="Heitman J."/>
            <person name="Gow N.A.R."/>
            <person name="Lorenz M.C."/>
            <person name="Birren B.W."/>
            <person name="Kellis M."/>
            <person name="Cuomo C.A."/>
        </authorList>
    </citation>
    <scope>NUCLEOTIDE SEQUENCE [LARGE SCALE GENOMIC DNA]</scope>
    <source>
        <strain>ATCC 11503 / BCRC 21390 / CBS 2605 / JCM 1781 / NBRC 1676 / NRRL YB-4239</strain>
    </source>
</reference>
<accession>A5DTP3</accession>
<dbReference type="EMBL" id="CH981524">
    <property type="protein sequence ID" value="EDK42551.1"/>
    <property type="molecule type" value="Genomic_DNA"/>
</dbReference>
<dbReference type="RefSeq" id="XP_001528209.1">
    <property type="nucleotide sequence ID" value="XM_001528159.1"/>
</dbReference>
<dbReference type="SMR" id="A5DTP3"/>
<dbReference type="FunCoup" id="A5DTP3">
    <property type="interactions" value="98"/>
</dbReference>
<dbReference type="STRING" id="379508.A5DTP3"/>
<dbReference type="GeneID" id="5235883"/>
<dbReference type="KEGG" id="lel:PVL30_000704"/>
<dbReference type="VEuPathDB" id="FungiDB:LELG_00729"/>
<dbReference type="eggNOG" id="ENOG502QPHX">
    <property type="taxonomic scope" value="Eukaryota"/>
</dbReference>
<dbReference type="HOGENOM" id="CLU_050427_0_0_1"/>
<dbReference type="InParanoid" id="A5DTP3"/>
<dbReference type="OMA" id="GIVHECD"/>
<dbReference type="OrthoDB" id="5598057at2759"/>
<dbReference type="Proteomes" id="UP000001996">
    <property type="component" value="Unassembled WGS sequence"/>
</dbReference>
<dbReference type="GO" id="GO:0005634">
    <property type="term" value="C:nucleus"/>
    <property type="evidence" value="ECO:0007669"/>
    <property type="project" value="UniProtKB-SubCell"/>
</dbReference>
<dbReference type="GO" id="GO:2000640">
    <property type="term" value="P:positive regulation of SREBP signaling pathway"/>
    <property type="evidence" value="ECO:0007669"/>
    <property type="project" value="TreeGrafter"/>
</dbReference>
<dbReference type="GO" id="GO:0006417">
    <property type="term" value="P:regulation of translation"/>
    <property type="evidence" value="ECO:0007669"/>
    <property type="project" value="UniProtKB-KW"/>
</dbReference>
<dbReference type="InterPro" id="IPR024318">
    <property type="entry name" value="Nro1/ETT1"/>
</dbReference>
<dbReference type="PANTHER" id="PTHR28290">
    <property type="entry name" value="ENHANCER OF TRANSLATION TERMINATION 1"/>
    <property type="match status" value="1"/>
</dbReference>
<dbReference type="PANTHER" id="PTHR28290:SF1">
    <property type="entry name" value="ENHANCER OF TRANSLATION TERMINATION 1"/>
    <property type="match status" value="1"/>
</dbReference>
<dbReference type="Pfam" id="PF12753">
    <property type="entry name" value="Nro1"/>
    <property type="match status" value="2"/>
</dbReference>